<proteinExistence type="inferred from homology"/>
<name>RL21_METPE</name>
<keyword id="KW-1185">Reference proteome</keyword>
<keyword id="KW-0687">Ribonucleoprotein</keyword>
<keyword id="KW-0689">Ribosomal protein</keyword>
<sequence length="96" mass="11117">MAHHNGPRKKTRYKFKKDLRKRGIVPVTSLIQHFEIGQSVHIVCEPSIQKGMPHRRFHGKTGKVIGQRGRAWMLTIFDGNMEKIVIARPQHLKAQK</sequence>
<organism>
    <name type="scientific">Methanosphaerula palustris (strain ATCC BAA-1556 / DSM 19958 / E1-9c)</name>
    <dbReference type="NCBI Taxonomy" id="521011"/>
    <lineage>
        <taxon>Archaea</taxon>
        <taxon>Methanobacteriati</taxon>
        <taxon>Methanobacteriota</taxon>
        <taxon>Stenosarchaea group</taxon>
        <taxon>Methanomicrobia</taxon>
        <taxon>Methanomicrobiales</taxon>
        <taxon>Methanoregulaceae</taxon>
        <taxon>Methanosphaerula</taxon>
    </lineage>
</organism>
<dbReference type="EMBL" id="CP001338">
    <property type="protein sequence ID" value="ACL15920.1"/>
    <property type="molecule type" value="Genomic_DNA"/>
</dbReference>
<dbReference type="RefSeq" id="WP_012617239.1">
    <property type="nucleotide sequence ID" value="NC_011832.1"/>
</dbReference>
<dbReference type="SMR" id="B8GEV3"/>
<dbReference type="STRING" id="521011.Mpal_0547"/>
<dbReference type="GeneID" id="7271963"/>
<dbReference type="KEGG" id="mpl:Mpal_0547"/>
<dbReference type="eggNOG" id="arCOG04129">
    <property type="taxonomic scope" value="Archaea"/>
</dbReference>
<dbReference type="HOGENOM" id="CLU_103610_1_1_2"/>
<dbReference type="OrthoDB" id="6295at2157"/>
<dbReference type="Proteomes" id="UP000002457">
    <property type="component" value="Chromosome"/>
</dbReference>
<dbReference type="GO" id="GO:1990904">
    <property type="term" value="C:ribonucleoprotein complex"/>
    <property type="evidence" value="ECO:0007669"/>
    <property type="project" value="UniProtKB-KW"/>
</dbReference>
<dbReference type="GO" id="GO:0005840">
    <property type="term" value="C:ribosome"/>
    <property type="evidence" value="ECO:0007669"/>
    <property type="project" value="UniProtKB-KW"/>
</dbReference>
<dbReference type="GO" id="GO:0003735">
    <property type="term" value="F:structural constituent of ribosome"/>
    <property type="evidence" value="ECO:0007669"/>
    <property type="project" value="InterPro"/>
</dbReference>
<dbReference type="GO" id="GO:0006412">
    <property type="term" value="P:translation"/>
    <property type="evidence" value="ECO:0007669"/>
    <property type="project" value="UniProtKB-UniRule"/>
</dbReference>
<dbReference type="FunFam" id="2.30.30.70:FF:000001">
    <property type="entry name" value="60S ribosomal protein L21"/>
    <property type="match status" value="1"/>
</dbReference>
<dbReference type="Gene3D" id="2.30.30.70">
    <property type="entry name" value="Ribosomal protein L21"/>
    <property type="match status" value="1"/>
</dbReference>
<dbReference type="HAMAP" id="MF_00369">
    <property type="entry name" value="Ribosomal_eL21"/>
    <property type="match status" value="1"/>
</dbReference>
<dbReference type="InterPro" id="IPR001147">
    <property type="entry name" value="Ribosomal_eL21"/>
</dbReference>
<dbReference type="InterPro" id="IPR022856">
    <property type="entry name" value="Ribosomal_eL21_arc"/>
</dbReference>
<dbReference type="InterPro" id="IPR018259">
    <property type="entry name" value="Ribosomal_eL21_CS"/>
</dbReference>
<dbReference type="InterPro" id="IPR036948">
    <property type="entry name" value="Ribosomal_eL21_sf"/>
</dbReference>
<dbReference type="InterPro" id="IPR008991">
    <property type="entry name" value="Translation_prot_SH3-like_sf"/>
</dbReference>
<dbReference type="NCBIfam" id="NF003303">
    <property type="entry name" value="PRK04306.1"/>
    <property type="match status" value="1"/>
</dbReference>
<dbReference type="PANTHER" id="PTHR20981">
    <property type="entry name" value="60S RIBOSOMAL PROTEIN L21"/>
    <property type="match status" value="1"/>
</dbReference>
<dbReference type="Pfam" id="PF01157">
    <property type="entry name" value="Ribosomal_L21e"/>
    <property type="match status" value="1"/>
</dbReference>
<dbReference type="SUPFAM" id="SSF50104">
    <property type="entry name" value="Translation proteins SH3-like domain"/>
    <property type="match status" value="1"/>
</dbReference>
<dbReference type="PROSITE" id="PS01171">
    <property type="entry name" value="RIBOSOMAL_L21E"/>
    <property type="match status" value="1"/>
</dbReference>
<evidence type="ECO:0000255" key="1">
    <source>
        <dbReference type="HAMAP-Rule" id="MF_00369"/>
    </source>
</evidence>
<evidence type="ECO:0000305" key="2"/>
<reference key="1">
    <citation type="journal article" date="2015" name="Genome Announc.">
        <title>Complete Genome Sequence of Methanosphaerula palustris E1-9CT, a Hydrogenotrophic Methanogen Isolated from a Minerotrophic Fen Peatland.</title>
        <authorList>
            <person name="Cadillo-Quiroz H."/>
            <person name="Browne P."/>
            <person name="Kyrpides N."/>
            <person name="Woyke T."/>
            <person name="Goodwin L."/>
            <person name="Detter C."/>
            <person name="Yavitt J.B."/>
            <person name="Zinder S.H."/>
        </authorList>
    </citation>
    <scope>NUCLEOTIDE SEQUENCE [LARGE SCALE GENOMIC DNA]</scope>
    <source>
        <strain>ATCC BAA-1556 / DSM 19958 / E1-9c</strain>
    </source>
</reference>
<comment type="similarity">
    <text evidence="1">Belongs to the eukaryotic ribosomal protein eL21 family.</text>
</comment>
<protein>
    <recommendedName>
        <fullName evidence="1">Large ribosomal subunit protein eL21</fullName>
    </recommendedName>
    <alternativeName>
        <fullName evidence="2">50S ribosomal protein L21e</fullName>
    </alternativeName>
</protein>
<accession>B8GEV3</accession>
<gene>
    <name evidence="1" type="primary">rpl21e</name>
    <name type="ordered locus">Mpal_0547</name>
</gene>
<feature type="chain" id="PRO_1000193984" description="Large ribosomal subunit protein eL21">
    <location>
        <begin position="1"/>
        <end position="96"/>
    </location>
</feature>